<evidence type="ECO:0000255" key="1">
    <source>
        <dbReference type="HAMAP-Rule" id="MF_01346"/>
    </source>
</evidence>
<name>ATPA_PSESM</name>
<comment type="function">
    <text evidence="1">Produces ATP from ADP in the presence of a proton gradient across the membrane. The alpha chain is a regulatory subunit.</text>
</comment>
<comment type="catalytic activity">
    <reaction evidence="1">
        <text>ATP + H2O + 4 H(+)(in) = ADP + phosphate + 5 H(+)(out)</text>
        <dbReference type="Rhea" id="RHEA:57720"/>
        <dbReference type="ChEBI" id="CHEBI:15377"/>
        <dbReference type="ChEBI" id="CHEBI:15378"/>
        <dbReference type="ChEBI" id="CHEBI:30616"/>
        <dbReference type="ChEBI" id="CHEBI:43474"/>
        <dbReference type="ChEBI" id="CHEBI:456216"/>
        <dbReference type="EC" id="7.1.2.2"/>
    </reaction>
</comment>
<comment type="subunit">
    <text evidence="1">F-type ATPases have 2 components, CF(1) - the catalytic core - and CF(0) - the membrane proton channel. CF(1) has five subunits: alpha(3), beta(3), gamma(1), delta(1), epsilon(1). CF(0) has three main subunits: a(1), b(2) and c(9-12). The alpha and beta chains form an alternating ring which encloses part of the gamma chain. CF(1) is attached to CF(0) by a central stalk formed by the gamma and epsilon chains, while a peripheral stalk is formed by the delta and b chains.</text>
</comment>
<comment type="subcellular location">
    <subcellularLocation>
        <location evidence="1">Cell inner membrane</location>
        <topology evidence="1">Peripheral membrane protein</topology>
    </subcellularLocation>
</comment>
<comment type="similarity">
    <text evidence="1">Belongs to the ATPase alpha/beta chains family.</text>
</comment>
<feature type="chain" id="PRO_0000238333" description="ATP synthase subunit alpha">
    <location>
        <begin position="1"/>
        <end position="514"/>
    </location>
</feature>
<feature type="binding site" evidence="1">
    <location>
        <begin position="170"/>
        <end position="177"/>
    </location>
    <ligand>
        <name>ATP</name>
        <dbReference type="ChEBI" id="CHEBI:30616"/>
    </ligand>
</feature>
<feature type="site" description="Required for activity" evidence="1">
    <location>
        <position position="374"/>
    </location>
</feature>
<protein>
    <recommendedName>
        <fullName evidence="1">ATP synthase subunit alpha</fullName>
        <ecNumber evidence="1">7.1.2.2</ecNumber>
    </recommendedName>
    <alternativeName>
        <fullName evidence="1">ATP synthase F1 sector subunit alpha</fullName>
    </alternativeName>
    <alternativeName>
        <fullName evidence="1">F-ATPase subunit alpha</fullName>
    </alternativeName>
</protein>
<reference key="1">
    <citation type="journal article" date="2003" name="Proc. Natl. Acad. Sci. U.S.A.">
        <title>The complete genome sequence of the Arabidopsis and tomato pathogen Pseudomonas syringae pv. tomato DC3000.</title>
        <authorList>
            <person name="Buell C.R."/>
            <person name="Joardar V."/>
            <person name="Lindeberg M."/>
            <person name="Selengut J."/>
            <person name="Paulsen I.T."/>
            <person name="Gwinn M.L."/>
            <person name="Dodson R.J."/>
            <person name="DeBoy R.T."/>
            <person name="Durkin A.S."/>
            <person name="Kolonay J.F."/>
            <person name="Madupu R."/>
            <person name="Daugherty S.C."/>
            <person name="Brinkac L.M."/>
            <person name="Beanan M.J."/>
            <person name="Haft D.H."/>
            <person name="Nelson W.C."/>
            <person name="Davidsen T.M."/>
            <person name="Zafar N."/>
            <person name="Zhou L."/>
            <person name="Liu J."/>
            <person name="Yuan Q."/>
            <person name="Khouri H.M."/>
            <person name="Fedorova N.B."/>
            <person name="Tran B."/>
            <person name="Russell D."/>
            <person name="Berry K.J."/>
            <person name="Utterback T.R."/>
            <person name="Van Aken S.E."/>
            <person name="Feldblyum T.V."/>
            <person name="D'Ascenzo M."/>
            <person name="Deng W.-L."/>
            <person name="Ramos A.R."/>
            <person name="Alfano J.R."/>
            <person name="Cartinhour S."/>
            <person name="Chatterjee A.K."/>
            <person name="Delaney T.P."/>
            <person name="Lazarowitz S.G."/>
            <person name="Martin G.B."/>
            <person name="Schneider D.J."/>
            <person name="Tang X."/>
            <person name="Bender C.L."/>
            <person name="White O."/>
            <person name="Fraser C.M."/>
            <person name="Collmer A."/>
        </authorList>
    </citation>
    <scope>NUCLEOTIDE SEQUENCE [LARGE SCALE GENOMIC DNA]</scope>
    <source>
        <strain>ATCC BAA-871 / DC3000</strain>
    </source>
</reference>
<keyword id="KW-0066">ATP synthesis</keyword>
<keyword id="KW-0067">ATP-binding</keyword>
<keyword id="KW-0997">Cell inner membrane</keyword>
<keyword id="KW-1003">Cell membrane</keyword>
<keyword id="KW-0139">CF(1)</keyword>
<keyword id="KW-0375">Hydrogen ion transport</keyword>
<keyword id="KW-0406">Ion transport</keyword>
<keyword id="KW-0472">Membrane</keyword>
<keyword id="KW-0547">Nucleotide-binding</keyword>
<keyword id="KW-1185">Reference proteome</keyword>
<keyword id="KW-1278">Translocase</keyword>
<keyword id="KW-0813">Transport</keyword>
<proteinExistence type="inferred from homology"/>
<dbReference type="EC" id="7.1.2.2" evidence="1"/>
<dbReference type="EMBL" id="AE016853">
    <property type="protein sequence ID" value="AAO59014.1"/>
    <property type="molecule type" value="Genomic_DNA"/>
</dbReference>
<dbReference type="RefSeq" id="NP_795319.1">
    <property type="nucleotide sequence ID" value="NC_004578.1"/>
</dbReference>
<dbReference type="RefSeq" id="WP_003377895.1">
    <property type="nucleotide sequence ID" value="NC_004578.1"/>
</dbReference>
<dbReference type="SMR" id="Q87TT2"/>
<dbReference type="STRING" id="223283.PSPTO_5601"/>
<dbReference type="GeneID" id="73738259"/>
<dbReference type="KEGG" id="pst:PSPTO_5601"/>
<dbReference type="PATRIC" id="fig|223283.9.peg.5738"/>
<dbReference type="eggNOG" id="COG0056">
    <property type="taxonomic scope" value="Bacteria"/>
</dbReference>
<dbReference type="HOGENOM" id="CLU_010091_2_1_6"/>
<dbReference type="OrthoDB" id="9803053at2"/>
<dbReference type="PhylomeDB" id="Q87TT2"/>
<dbReference type="Proteomes" id="UP000002515">
    <property type="component" value="Chromosome"/>
</dbReference>
<dbReference type="GO" id="GO:0005886">
    <property type="term" value="C:plasma membrane"/>
    <property type="evidence" value="ECO:0007669"/>
    <property type="project" value="UniProtKB-SubCell"/>
</dbReference>
<dbReference type="GO" id="GO:0045259">
    <property type="term" value="C:proton-transporting ATP synthase complex"/>
    <property type="evidence" value="ECO:0007669"/>
    <property type="project" value="UniProtKB-KW"/>
</dbReference>
<dbReference type="GO" id="GO:0043531">
    <property type="term" value="F:ADP binding"/>
    <property type="evidence" value="ECO:0007669"/>
    <property type="project" value="TreeGrafter"/>
</dbReference>
<dbReference type="GO" id="GO:0005524">
    <property type="term" value="F:ATP binding"/>
    <property type="evidence" value="ECO:0007669"/>
    <property type="project" value="UniProtKB-UniRule"/>
</dbReference>
<dbReference type="GO" id="GO:0046933">
    <property type="term" value="F:proton-transporting ATP synthase activity, rotational mechanism"/>
    <property type="evidence" value="ECO:0007669"/>
    <property type="project" value="UniProtKB-UniRule"/>
</dbReference>
<dbReference type="CDD" id="cd18113">
    <property type="entry name" value="ATP-synt_F1_alpha_C"/>
    <property type="match status" value="1"/>
</dbReference>
<dbReference type="CDD" id="cd18116">
    <property type="entry name" value="ATP-synt_F1_alpha_N"/>
    <property type="match status" value="1"/>
</dbReference>
<dbReference type="CDD" id="cd01132">
    <property type="entry name" value="F1-ATPase_alpha_CD"/>
    <property type="match status" value="1"/>
</dbReference>
<dbReference type="FunFam" id="1.20.150.20:FF:000001">
    <property type="entry name" value="ATP synthase subunit alpha"/>
    <property type="match status" value="1"/>
</dbReference>
<dbReference type="FunFam" id="2.40.30.20:FF:000001">
    <property type="entry name" value="ATP synthase subunit alpha"/>
    <property type="match status" value="1"/>
</dbReference>
<dbReference type="FunFam" id="3.40.50.300:FF:000002">
    <property type="entry name" value="ATP synthase subunit alpha"/>
    <property type="match status" value="1"/>
</dbReference>
<dbReference type="Gene3D" id="2.40.30.20">
    <property type="match status" value="1"/>
</dbReference>
<dbReference type="Gene3D" id="1.20.150.20">
    <property type="entry name" value="ATP synthase alpha/beta chain, C-terminal domain"/>
    <property type="match status" value="1"/>
</dbReference>
<dbReference type="Gene3D" id="3.40.50.300">
    <property type="entry name" value="P-loop containing nucleotide triphosphate hydrolases"/>
    <property type="match status" value="1"/>
</dbReference>
<dbReference type="HAMAP" id="MF_01346">
    <property type="entry name" value="ATP_synth_alpha_bact"/>
    <property type="match status" value="1"/>
</dbReference>
<dbReference type="InterPro" id="IPR023366">
    <property type="entry name" value="ATP_synth_asu-like_sf"/>
</dbReference>
<dbReference type="InterPro" id="IPR000793">
    <property type="entry name" value="ATP_synth_asu_C"/>
</dbReference>
<dbReference type="InterPro" id="IPR038376">
    <property type="entry name" value="ATP_synth_asu_C_sf"/>
</dbReference>
<dbReference type="InterPro" id="IPR033732">
    <property type="entry name" value="ATP_synth_F1_a_nt-bd_dom"/>
</dbReference>
<dbReference type="InterPro" id="IPR005294">
    <property type="entry name" value="ATP_synth_F1_asu"/>
</dbReference>
<dbReference type="InterPro" id="IPR020003">
    <property type="entry name" value="ATPase_a/bsu_AS"/>
</dbReference>
<dbReference type="InterPro" id="IPR004100">
    <property type="entry name" value="ATPase_F1/V1/A1_a/bsu_N"/>
</dbReference>
<dbReference type="InterPro" id="IPR036121">
    <property type="entry name" value="ATPase_F1/V1/A1_a/bsu_N_sf"/>
</dbReference>
<dbReference type="InterPro" id="IPR000194">
    <property type="entry name" value="ATPase_F1/V1/A1_a/bsu_nucl-bd"/>
</dbReference>
<dbReference type="InterPro" id="IPR027417">
    <property type="entry name" value="P-loop_NTPase"/>
</dbReference>
<dbReference type="NCBIfam" id="TIGR00962">
    <property type="entry name" value="atpA"/>
    <property type="match status" value="1"/>
</dbReference>
<dbReference type="NCBIfam" id="NF009884">
    <property type="entry name" value="PRK13343.1"/>
    <property type="match status" value="1"/>
</dbReference>
<dbReference type="PANTHER" id="PTHR48082">
    <property type="entry name" value="ATP SYNTHASE SUBUNIT ALPHA, MITOCHONDRIAL"/>
    <property type="match status" value="1"/>
</dbReference>
<dbReference type="PANTHER" id="PTHR48082:SF2">
    <property type="entry name" value="ATP SYNTHASE SUBUNIT ALPHA, MITOCHONDRIAL"/>
    <property type="match status" value="1"/>
</dbReference>
<dbReference type="Pfam" id="PF00006">
    <property type="entry name" value="ATP-synt_ab"/>
    <property type="match status" value="1"/>
</dbReference>
<dbReference type="Pfam" id="PF00306">
    <property type="entry name" value="ATP-synt_ab_C"/>
    <property type="match status" value="1"/>
</dbReference>
<dbReference type="Pfam" id="PF02874">
    <property type="entry name" value="ATP-synt_ab_N"/>
    <property type="match status" value="1"/>
</dbReference>
<dbReference type="PIRSF" id="PIRSF039088">
    <property type="entry name" value="F_ATPase_subunit_alpha"/>
    <property type="match status" value="1"/>
</dbReference>
<dbReference type="SUPFAM" id="SSF47917">
    <property type="entry name" value="C-terminal domain of alpha and beta subunits of F1 ATP synthase"/>
    <property type="match status" value="1"/>
</dbReference>
<dbReference type="SUPFAM" id="SSF50615">
    <property type="entry name" value="N-terminal domain of alpha and beta subunits of F1 ATP synthase"/>
    <property type="match status" value="1"/>
</dbReference>
<dbReference type="SUPFAM" id="SSF52540">
    <property type="entry name" value="P-loop containing nucleoside triphosphate hydrolases"/>
    <property type="match status" value="1"/>
</dbReference>
<dbReference type="PROSITE" id="PS00152">
    <property type="entry name" value="ATPASE_ALPHA_BETA"/>
    <property type="match status" value="1"/>
</dbReference>
<sequence length="514" mass="55324">MQQLNPSEISEIIKGRIDKLDVTSQARNEGTVVSVSDGIVRIHGLADVMYGEMIEFPGGVYGMALNLEQDSVGAVVLGAYTTLAEGMSAKCTGRILEVPVGKELLGRVVDALGNPVDGKGPLNNTETDAVEKVAPGVIWRKSVDQPVQTGYKAVDAMIPVGRGQRELIIGDRQIGKTALAIDAIINQKNSGIFCVYVAIGQKQSTIANVVRKLEENGALANTIVVAASASESAALQFLAPYSGCTMGEFFRDRGEDALIVYDDLSKQAVAYRQISLLLRRPPGREAYPGDVFYLHSRLLERASRVSEEYVEKFTNGAVTGKTGSLTALPIIETQAGDVSAFVPTNVISITDGQIFLESAMFNSGIRPAVNAGVSVSRVGGAAQTKIIKKLSGGIRTALAQYRELAAFAQFASDLDEATRKQLEHGQRVTELMKQKQYAPMSIADMALSLYAAERGFLTDVEIAKIGSFEQALIAYFNRDHADLMAKINVKGDFNDEIDAGMKAGIEKFKATQTW</sequence>
<accession>Q87TT2</accession>
<gene>
    <name evidence="1" type="primary">atpA</name>
    <name type="ordered locus">PSPTO_5601</name>
</gene>
<organism>
    <name type="scientific">Pseudomonas syringae pv. tomato (strain ATCC BAA-871 / DC3000)</name>
    <dbReference type="NCBI Taxonomy" id="223283"/>
    <lineage>
        <taxon>Bacteria</taxon>
        <taxon>Pseudomonadati</taxon>
        <taxon>Pseudomonadota</taxon>
        <taxon>Gammaproteobacteria</taxon>
        <taxon>Pseudomonadales</taxon>
        <taxon>Pseudomonadaceae</taxon>
        <taxon>Pseudomonas</taxon>
    </lineage>
</organism>